<feature type="chain" id="PRO_0000238617" description="Actin, cytoplasmic 1">
    <location>
        <begin position="1"/>
        <end position="361"/>
    </location>
</feature>
<feature type="modified residue" description="Methionine (R)-sulfoxide" evidence="3">
    <location>
        <position position="29"/>
    </location>
</feature>
<feature type="modified residue" description="Methionine (R)-sulfoxide" evidence="3">
    <location>
        <position position="32"/>
    </location>
</feature>
<feature type="modified residue" description="Tele-methylhistidine" evidence="3">
    <location>
        <position position="58"/>
    </location>
</feature>
<feature type="modified residue" description="N6-methyllysine" evidence="2">
    <location>
        <position position="69"/>
    </location>
</feature>
<protein>
    <recommendedName>
        <fullName>Actin, cytoplasmic 1</fullName>
        <ecNumber evidence="4">3.6.4.-</ecNumber>
    </recommendedName>
    <alternativeName>
        <fullName>Beta-actin</fullName>
    </alternativeName>
</protein>
<proteinExistence type="evidence at protein level"/>
<dbReference type="EC" id="3.6.4.-" evidence="4"/>
<dbReference type="SMR" id="P84856"/>
<dbReference type="GO" id="GO:0015629">
    <property type="term" value="C:actin cytoskeleton"/>
    <property type="evidence" value="ECO:0000250"/>
    <property type="project" value="UniProtKB"/>
</dbReference>
<dbReference type="GO" id="GO:0005737">
    <property type="term" value="C:cytoplasm"/>
    <property type="evidence" value="ECO:0007669"/>
    <property type="project" value="UniProtKB-KW"/>
</dbReference>
<dbReference type="GO" id="GO:0005634">
    <property type="term" value="C:nucleus"/>
    <property type="evidence" value="ECO:0000250"/>
    <property type="project" value="UniProtKB"/>
</dbReference>
<dbReference type="GO" id="GO:0032991">
    <property type="term" value="C:protein-containing complex"/>
    <property type="evidence" value="ECO:0000250"/>
    <property type="project" value="UniProtKB"/>
</dbReference>
<dbReference type="GO" id="GO:0005524">
    <property type="term" value="F:ATP binding"/>
    <property type="evidence" value="ECO:0007669"/>
    <property type="project" value="UniProtKB-KW"/>
</dbReference>
<dbReference type="GO" id="GO:0016787">
    <property type="term" value="F:hydrolase activity"/>
    <property type="evidence" value="ECO:0007669"/>
    <property type="project" value="UniProtKB-KW"/>
</dbReference>
<dbReference type="CDD" id="cd10224">
    <property type="entry name" value="ASKHA_NBD_actin"/>
    <property type="match status" value="1"/>
</dbReference>
<dbReference type="FunFam" id="3.30.420.40:FF:000131">
    <property type="entry name" value="Actin, alpha skeletal muscle"/>
    <property type="match status" value="1"/>
</dbReference>
<dbReference type="FunFam" id="3.30.420.40:FF:000291">
    <property type="entry name" value="Actin, alpha skeletal muscle"/>
    <property type="match status" value="1"/>
</dbReference>
<dbReference type="FunFam" id="3.90.640.10:FF:000047">
    <property type="entry name" value="Actin, alpha skeletal muscle"/>
    <property type="match status" value="1"/>
</dbReference>
<dbReference type="FunFam" id="3.30.420.40:FF:000058">
    <property type="entry name" value="Putative actin-related protein 5"/>
    <property type="match status" value="1"/>
</dbReference>
<dbReference type="Gene3D" id="3.30.420.40">
    <property type="match status" value="2"/>
</dbReference>
<dbReference type="Gene3D" id="3.90.640.10">
    <property type="entry name" value="Actin, Chain A, domain 4"/>
    <property type="match status" value="1"/>
</dbReference>
<dbReference type="InterPro" id="IPR004000">
    <property type="entry name" value="Actin"/>
</dbReference>
<dbReference type="InterPro" id="IPR004001">
    <property type="entry name" value="Actin_CS"/>
</dbReference>
<dbReference type="InterPro" id="IPR043129">
    <property type="entry name" value="ATPase_NBD"/>
</dbReference>
<dbReference type="PANTHER" id="PTHR11937">
    <property type="entry name" value="ACTIN"/>
    <property type="match status" value="1"/>
</dbReference>
<dbReference type="Pfam" id="PF00022">
    <property type="entry name" value="Actin"/>
    <property type="match status" value="1"/>
</dbReference>
<dbReference type="PRINTS" id="PR00190">
    <property type="entry name" value="ACTIN"/>
</dbReference>
<dbReference type="SMART" id="SM00268">
    <property type="entry name" value="ACTIN"/>
    <property type="match status" value="1"/>
</dbReference>
<dbReference type="SUPFAM" id="SSF53067">
    <property type="entry name" value="Actin-like ATPase domain"/>
    <property type="match status" value="2"/>
</dbReference>
<dbReference type="PROSITE" id="PS00406">
    <property type="entry name" value="ACTINS_1"/>
    <property type="match status" value="1"/>
</dbReference>
<dbReference type="PROSITE" id="PS00432">
    <property type="entry name" value="ACTINS_2"/>
    <property type="match status" value="1"/>
</dbReference>
<gene>
    <name type="primary">ACTB</name>
</gene>
<name>ACTB_CHLPG</name>
<comment type="function">
    <text evidence="2 5">Actin is a highly conserved protein that polymerizes to produce filaments that form cross-linked networks in the cytoplasm of cells (By similarity). Actin exists in both monomeric (G-actin) and polymeric (F-actin) forms, both forms playing key functions, such as cell motility and contraction (By similarity). In addition to their role in the cytoplasmic cytoskeleton, G- and F-actin also localize in the nucleus, and regulate gene transcription and motility and repair of damaged DNA (By similarity). Plays a role in the assembly of the gamma-tubulin ring complex (gTuRC), which regulates the minus-end nucleation of alpha-beta tubulin heterodimers that grow into microtubule protafilaments (By similarity). Part of the ACTR1A/ACTB filament around which the dynactin complex is built (By similarity). The dynactin multiprotein complex activates the molecular motor dynein for ultra-processive transport along microtubules (By similarity).</text>
</comment>
<comment type="catalytic activity">
    <reaction evidence="4">
        <text>ATP + H2O = ADP + phosphate + H(+)</text>
        <dbReference type="Rhea" id="RHEA:13065"/>
        <dbReference type="ChEBI" id="CHEBI:15377"/>
        <dbReference type="ChEBI" id="CHEBI:15378"/>
        <dbReference type="ChEBI" id="CHEBI:30616"/>
        <dbReference type="ChEBI" id="CHEBI:43474"/>
        <dbReference type="ChEBI" id="CHEBI:456216"/>
    </reaction>
</comment>
<comment type="subunit">
    <text evidence="1 2 3 5">Polymerization of globular actin (G-actin) leads to a structural filament (F-actin) in the form of a two-stranded helix (By similarity). Each actin can bind to 4 others (By similarity). Identified in a IGF2BP1-dependent mRNP granule complex containing untranslated mRNAs (By similarity). Component of the BAF complex, which includes at least actin (ACTB), ARID1A, ARID1B/BAF250, SMARCA2, SMARCA4/BRG1, ACTL6A/BAF53, ACTL6B/BAF53B, SMARCE1/BAF57 SMARCC1/BAF155, SMARCC2/BAF170, SMARCB1/SNF5/INI1, and one or more of SMARCD1/BAF60A, SMARCD2/BAF60B, or SMARCD3/BAF60C (By similarity). In muscle cells, the BAF complex also contains DPF3 (By similarity). Found in a complex with XPO6, Ran, ACTB and PFN1 (By similarity). Interacts with PFN1 (By similarity). Interacts with XPO6 and EMD (By similarity). Interacts with ERBB2 (By similarity). Interacts with GCSAM (By similarity). Interacts with TBC1D21 (By similarity). Interacts with CPNE1 (via VWFA domain) and CPNE4 (via VWFA domain) (By similarity). Interacts with DHX9 (via C-terminus); this interaction is direct and mediates the attachment to nuclear ribonucleoprotein complexes (By similarity). Interacts with FAM107A (By similarity). Associates with the gamma-tubulin ring complex (gTuRC) consisting of TUBGCP2, TUBGCP3, TUBGCP4, TUBGCP5 and TUBGCP6 and gamma-tubulin TUBG1 or TUBG2; within the complex, interacts with TUBGCP3 and TUBGCP6 to form a luminal bridge with MZT1 that stabilizes the initial structure during complex assembly (By similarity). Part of the ACTR1A/ACTB filament around which the dynactin complex is built (By similarity). The filament contains 8 copies of ACTR1A and 1 ACTB (By similarity). Interacts with TPRN which forms ring-like structures in the stereocilium taper region; the interaction may stabilize stereocilia in inner ear hair cells (By similarity). Interacts with AMOTL2 (via N-terminus), the interaction facilitates binding of cell junction complexes to actin fibers in endothelial cells (By similarity).</text>
</comment>
<comment type="subcellular location">
    <subcellularLocation>
        <location evidence="2">Cytoplasm</location>
        <location evidence="2">Cytoskeleton</location>
    </subcellularLocation>
    <subcellularLocation>
        <location evidence="2">Nucleus</location>
    </subcellularLocation>
    <text evidence="2">Localized in cytoplasmic mRNP granules containing untranslated mRNAs.</text>
</comment>
<comment type="PTM">
    <text evidence="2">ISGylated.</text>
</comment>
<comment type="PTM">
    <text evidence="3">Oxidation of Met-29 and Met-32 by MICALs (MICAL1, MICAL2 or MICAL3) to form methionine sulfoxide promotes actin filament depolymerization. MICAL1 and MICAL2 produce the (R)-S-oxide form. The (R)-S-oxide form is reverted by MSRB1 and MSRB2, which promote actin repolymerization.</text>
</comment>
<comment type="PTM">
    <text evidence="2">Monomethylation at Lys-69 (K84me1) regulates actin-myosin interaction and actomyosin-dependent processes. Demethylation by ALKBH4 is required for maintaining actomyosin dynamics supporting normal cleavage furrow ingression during cytokinesis and cell migration.</text>
</comment>
<comment type="PTM">
    <text evidence="2">Actin, cytoplasmic 1, N-terminally processed: N-terminal acetylation by NAA80 affects actin filament depolymerization and elongation, including elongation driven by formins. In contrast, filament nucleation by the Arp2/3 complex is not affected.</text>
</comment>
<comment type="PTM">
    <text evidence="2 3">Methylated at His-58 by SETD3 (By similarity). Methylation at His-73 is required for smooth muscle contraction of the laboring uterus during delivery (By similarity).</text>
</comment>
<comment type="mass spectrometry" mass="40536.0" error="80.0" method="MALDI" evidence="6"/>
<comment type="miscellaneous">
    <text evidence="2">In vertebrates 3 main groups of actin isoforms, alpha, beta and gamma have been identified. The alpha actins are found in muscle tissues and are a major constituent of the contractile apparatus. The beta and gamma actins coexist in most cell types as components of the cytoskeleton and as mediators of internal cell motility.</text>
</comment>
<comment type="similarity">
    <text evidence="7">Belongs to the actin family.</text>
</comment>
<accession>P84856</accession>
<reference evidence="7" key="1">
    <citation type="submission" date="2006-04" db="UniProtKB">
        <title>Molecular biology of dengue; characterization of cellular receptors.</title>
        <authorList>
            <person name="Seema Z."/>
            <person name="Jain S.K."/>
        </authorList>
    </citation>
    <scope>PROTEIN SEQUENCE</scope>
    <scope>MASS SPECTROMETRY</scope>
    <source>
        <tissue evidence="6">Kidney epithelium</tissue>
    </source>
</reference>
<keyword id="KW-0067">ATP-binding</keyword>
<keyword id="KW-0963">Cytoplasm</keyword>
<keyword id="KW-0206">Cytoskeleton</keyword>
<keyword id="KW-0903">Direct protein sequencing</keyword>
<keyword id="KW-0378">Hydrolase</keyword>
<keyword id="KW-0488">Methylation</keyword>
<keyword id="KW-0547">Nucleotide-binding</keyword>
<keyword id="KW-0539">Nucleus</keyword>
<keyword id="KW-0558">Oxidation</keyword>
<keyword id="KW-0832">Ubl conjugation</keyword>
<sequence length="361" mass="40445">MCKAGFAGDDAPRAVFPSIVGRPRHQGVMVGMGQKDSYVGDEAQSKRGILTLKYPIEHGIVYNWDDMEKIWHHTFYNELRVAPEEHPVLLTEAPLNPKANLEKMTQIMFETFNTPAMYVAIQAVLSLYASGRTTGIVMDSGDGVTHTVPIYEGYALPHAILRLDLAGRDLTDYLMKILTERYGYSFTTTAEREIVRDIKEKLCYVALDFEQEMATAASSSSLEKSYELPDGQVITIGNERFRCPEALFQPSFLGMESCGIHETTFNSIMKCDVDIRKDLYANTVLSGGTTMYPGIADRMQKEITALAPSTMKIKIIAPPERKYSVWIGGSILASLSTFQQMWISKQEYDESGPSIVHRKCF</sequence>
<evidence type="ECO:0000250" key="1">
    <source>
        <dbReference type="UniProtKB" id="O18840"/>
    </source>
</evidence>
<evidence type="ECO:0000250" key="2">
    <source>
        <dbReference type="UniProtKB" id="P60709"/>
    </source>
</evidence>
<evidence type="ECO:0000250" key="3">
    <source>
        <dbReference type="UniProtKB" id="P60710"/>
    </source>
</evidence>
<evidence type="ECO:0000250" key="4">
    <source>
        <dbReference type="UniProtKB" id="P68137"/>
    </source>
</evidence>
<evidence type="ECO:0000250" key="5">
    <source>
        <dbReference type="UniProtKB" id="Q6QAQ1"/>
    </source>
</evidence>
<evidence type="ECO:0000269" key="6">
    <source ref="1"/>
</evidence>
<evidence type="ECO:0000305" key="7"/>
<organism>
    <name type="scientific">Chlorocebus pygerythrus</name>
    <name type="common">Vervet monkey</name>
    <name type="synonym">Cercopithecus pygerythrus</name>
    <dbReference type="NCBI Taxonomy" id="60710"/>
    <lineage>
        <taxon>Eukaryota</taxon>
        <taxon>Metazoa</taxon>
        <taxon>Chordata</taxon>
        <taxon>Craniata</taxon>
        <taxon>Vertebrata</taxon>
        <taxon>Euteleostomi</taxon>
        <taxon>Mammalia</taxon>
        <taxon>Eutheria</taxon>
        <taxon>Euarchontoglires</taxon>
        <taxon>Primates</taxon>
        <taxon>Haplorrhini</taxon>
        <taxon>Catarrhini</taxon>
        <taxon>Cercopithecidae</taxon>
        <taxon>Cercopithecinae</taxon>
        <taxon>Chlorocebus</taxon>
    </lineage>
</organism>